<accession>Q99S37</accession>
<dbReference type="EMBL" id="BA000017">
    <property type="protein sequence ID" value="BAB58396.1"/>
    <property type="molecule type" value="Genomic_DNA"/>
</dbReference>
<dbReference type="RefSeq" id="WP_000623881.1">
    <property type="nucleotide sequence ID" value="NC_002758.2"/>
</dbReference>
<dbReference type="SMR" id="Q99S37"/>
<dbReference type="KEGG" id="sav:SAV2234"/>
<dbReference type="HOGENOM" id="CLU_098841_0_1_9"/>
<dbReference type="PhylomeDB" id="Q99S37"/>
<dbReference type="Proteomes" id="UP000002481">
    <property type="component" value="Chromosome"/>
</dbReference>
<dbReference type="GO" id="GO:0022625">
    <property type="term" value="C:cytosolic large ribosomal subunit"/>
    <property type="evidence" value="ECO:0007669"/>
    <property type="project" value="TreeGrafter"/>
</dbReference>
<dbReference type="GO" id="GO:0008097">
    <property type="term" value="F:5S rRNA binding"/>
    <property type="evidence" value="ECO:0007669"/>
    <property type="project" value="TreeGrafter"/>
</dbReference>
<dbReference type="GO" id="GO:0003735">
    <property type="term" value="F:structural constituent of ribosome"/>
    <property type="evidence" value="ECO:0007669"/>
    <property type="project" value="InterPro"/>
</dbReference>
<dbReference type="GO" id="GO:0006412">
    <property type="term" value="P:translation"/>
    <property type="evidence" value="ECO:0007669"/>
    <property type="project" value="UniProtKB-UniRule"/>
</dbReference>
<dbReference type="CDD" id="cd00432">
    <property type="entry name" value="Ribosomal_L18_L5e"/>
    <property type="match status" value="1"/>
</dbReference>
<dbReference type="FunFam" id="3.30.420.100:FF:000001">
    <property type="entry name" value="50S ribosomal protein L18"/>
    <property type="match status" value="1"/>
</dbReference>
<dbReference type="Gene3D" id="3.30.420.100">
    <property type="match status" value="1"/>
</dbReference>
<dbReference type="HAMAP" id="MF_01337_B">
    <property type="entry name" value="Ribosomal_uL18_B"/>
    <property type="match status" value="1"/>
</dbReference>
<dbReference type="InterPro" id="IPR004389">
    <property type="entry name" value="Ribosomal_uL18_bac-type"/>
</dbReference>
<dbReference type="InterPro" id="IPR005484">
    <property type="entry name" value="Ribosomal_uL18_bac/euk"/>
</dbReference>
<dbReference type="NCBIfam" id="TIGR00060">
    <property type="entry name" value="L18_bact"/>
    <property type="match status" value="1"/>
</dbReference>
<dbReference type="PANTHER" id="PTHR12899">
    <property type="entry name" value="39S RIBOSOMAL PROTEIN L18, MITOCHONDRIAL"/>
    <property type="match status" value="1"/>
</dbReference>
<dbReference type="PANTHER" id="PTHR12899:SF3">
    <property type="entry name" value="LARGE RIBOSOMAL SUBUNIT PROTEIN UL18M"/>
    <property type="match status" value="1"/>
</dbReference>
<dbReference type="Pfam" id="PF00861">
    <property type="entry name" value="Ribosomal_L18p"/>
    <property type="match status" value="1"/>
</dbReference>
<dbReference type="SUPFAM" id="SSF53137">
    <property type="entry name" value="Translational machinery components"/>
    <property type="match status" value="1"/>
</dbReference>
<reference key="1">
    <citation type="journal article" date="2001" name="Lancet">
        <title>Whole genome sequencing of meticillin-resistant Staphylococcus aureus.</title>
        <authorList>
            <person name="Kuroda M."/>
            <person name="Ohta T."/>
            <person name="Uchiyama I."/>
            <person name="Baba T."/>
            <person name="Yuzawa H."/>
            <person name="Kobayashi I."/>
            <person name="Cui L."/>
            <person name="Oguchi A."/>
            <person name="Aoki K."/>
            <person name="Nagai Y."/>
            <person name="Lian J.-Q."/>
            <person name="Ito T."/>
            <person name="Kanamori M."/>
            <person name="Matsumaru H."/>
            <person name="Maruyama A."/>
            <person name="Murakami H."/>
            <person name="Hosoyama A."/>
            <person name="Mizutani-Ui Y."/>
            <person name="Takahashi N.K."/>
            <person name="Sawano T."/>
            <person name="Inoue R."/>
            <person name="Kaito C."/>
            <person name="Sekimizu K."/>
            <person name="Hirakawa H."/>
            <person name="Kuhara S."/>
            <person name="Goto S."/>
            <person name="Yabuzaki J."/>
            <person name="Kanehisa M."/>
            <person name="Yamashita A."/>
            <person name="Oshima K."/>
            <person name="Furuya K."/>
            <person name="Yoshino C."/>
            <person name="Shiba T."/>
            <person name="Hattori M."/>
            <person name="Ogasawara N."/>
            <person name="Hayashi H."/>
            <person name="Hiramatsu K."/>
        </authorList>
    </citation>
    <scope>NUCLEOTIDE SEQUENCE [LARGE SCALE GENOMIC DNA]</scope>
    <source>
        <strain>Mu50 / ATCC 700699</strain>
    </source>
</reference>
<keyword id="KW-0687">Ribonucleoprotein</keyword>
<keyword id="KW-0689">Ribosomal protein</keyword>
<keyword id="KW-0694">RNA-binding</keyword>
<keyword id="KW-0699">rRNA-binding</keyword>
<organism>
    <name type="scientific">Staphylococcus aureus (strain Mu50 / ATCC 700699)</name>
    <dbReference type="NCBI Taxonomy" id="158878"/>
    <lineage>
        <taxon>Bacteria</taxon>
        <taxon>Bacillati</taxon>
        <taxon>Bacillota</taxon>
        <taxon>Bacilli</taxon>
        <taxon>Bacillales</taxon>
        <taxon>Staphylococcaceae</taxon>
        <taxon>Staphylococcus</taxon>
    </lineage>
</organism>
<feature type="chain" id="PRO_0000131343" description="Large ribosomal subunit protein uL18">
    <location>
        <begin position="1"/>
        <end position="119"/>
    </location>
</feature>
<comment type="function">
    <text evidence="1">This is one of the proteins that bind and probably mediate the attachment of the 5S RNA into the large ribosomal subunit, where it forms part of the central protuberance.</text>
</comment>
<comment type="subunit">
    <text evidence="1">Part of the 50S ribosomal subunit; part of the 5S rRNA/L5/L18/L25 subcomplex. Contacts the 5S and 23S rRNAs.</text>
</comment>
<comment type="similarity">
    <text evidence="1">Belongs to the universal ribosomal protein uL18 family.</text>
</comment>
<gene>
    <name evidence="1" type="primary">rplR</name>
    <name type="ordered locus">SAV2234</name>
</gene>
<proteinExistence type="inferred from homology"/>
<protein>
    <recommendedName>
        <fullName evidence="1">Large ribosomal subunit protein uL18</fullName>
    </recommendedName>
    <alternativeName>
        <fullName evidence="2">50S ribosomal protein L18</fullName>
    </alternativeName>
</protein>
<evidence type="ECO:0000255" key="1">
    <source>
        <dbReference type="HAMAP-Rule" id="MF_01337"/>
    </source>
</evidence>
<evidence type="ECO:0000305" key="2"/>
<name>RL18_STAAM</name>
<sequence length="119" mass="13097">MISKIDKNKVRLKRHARVRTNLSGTAEKPRLNVYRSNKHIYAQIIDDNKGVTLAQASSKDSDIATTATKVELATKVGEAIAKKAADKGIKEIVFDRGGYLYHGRVKALAEAARESGLEF</sequence>